<gene>
    <name type="primary">LEA1</name>
    <name type="ordered locus">CAGL0E05786g</name>
</gene>
<comment type="function">
    <text evidence="1">Involved in pre-mRNA splicing.</text>
</comment>
<comment type="subunit">
    <text evidence="1">Associated with the spliceosome.</text>
</comment>
<comment type="subcellular location">
    <subcellularLocation>
        <location evidence="1">Nucleus</location>
    </subcellularLocation>
</comment>
<comment type="similarity">
    <text evidence="2">Belongs to the U2 small nuclear ribonucleoprotein A family.</text>
</comment>
<organism>
    <name type="scientific">Candida glabrata (strain ATCC 2001 / BCRC 20586 / JCM 3761 / NBRC 0622 / NRRL Y-65 / CBS 138)</name>
    <name type="common">Yeast</name>
    <name type="synonym">Nakaseomyces glabratus</name>
    <dbReference type="NCBI Taxonomy" id="284593"/>
    <lineage>
        <taxon>Eukaryota</taxon>
        <taxon>Fungi</taxon>
        <taxon>Dikarya</taxon>
        <taxon>Ascomycota</taxon>
        <taxon>Saccharomycotina</taxon>
        <taxon>Saccharomycetes</taxon>
        <taxon>Saccharomycetales</taxon>
        <taxon>Saccharomycetaceae</taxon>
        <taxon>Nakaseomyces</taxon>
    </lineage>
</organism>
<evidence type="ECO:0000250" key="1"/>
<evidence type="ECO:0000305" key="2"/>
<name>RU2A_CANGA</name>
<feature type="chain" id="PRO_0000074182" description="U2 small nuclear ribonucleoprotein A'">
    <location>
        <begin position="1"/>
        <end position="266"/>
    </location>
</feature>
<feature type="repeat" description="LRR 1">
    <location>
        <begin position="30"/>
        <end position="51"/>
    </location>
</feature>
<feature type="repeat" description="LRR 2">
    <location>
        <begin position="53"/>
        <end position="74"/>
    </location>
</feature>
<feature type="repeat" description="LRR 3">
    <location>
        <begin position="75"/>
        <end position="95"/>
    </location>
</feature>
<feature type="repeat" description="LRR 4">
    <location>
        <begin position="97"/>
        <end position="118"/>
    </location>
</feature>
<feature type="domain" description="LRRCT">
    <location>
        <begin position="132"/>
        <end position="170"/>
    </location>
</feature>
<keyword id="KW-0433">Leucine-rich repeat</keyword>
<keyword id="KW-0507">mRNA processing</keyword>
<keyword id="KW-0508">mRNA splicing</keyword>
<keyword id="KW-0539">Nucleus</keyword>
<keyword id="KW-1185">Reference proteome</keyword>
<keyword id="KW-0677">Repeat</keyword>
<keyword id="KW-0747">Spliceosome</keyword>
<sequence length="266" mass="29808">MKFTPGAVEDAPSYYVDHDNGKYNTQKCVILRNLGLEGDDIAMPASLNHLAKPTHILDLTNNDLVFFPDLHHRDDIETLLLSKNRLMVLDAALLPSKLKSLSLAFNGIENFETLIPLSHCPSTVRDLVLIGNPICHLSEYRQRILALVPSLEVLDFKLVSQAEKAQAVKDHVAVMKKIKEDNRQIHQRKKKALAAEVDGKNTFGRNTKSLTEAAKVTKPRDKTIEVMNTVVGKLTEEKKKKIREQLANASSMEELERLERLLTGGV</sequence>
<reference key="1">
    <citation type="journal article" date="2004" name="Nature">
        <title>Genome evolution in yeasts.</title>
        <authorList>
            <person name="Dujon B."/>
            <person name="Sherman D."/>
            <person name="Fischer G."/>
            <person name="Durrens P."/>
            <person name="Casaregola S."/>
            <person name="Lafontaine I."/>
            <person name="de Montigny J."/>
            <person name="Marck C."/>
            <person name="Neuveglise C."/>
            <person name="Talla E."/>
            <person name="Goffard N."/>
            <person name="Frangeul L."/>
            <person name="Aigle M."/>
            <person name="Anthouard V."/>
            <person name="Babour A."/>
            <person name="Barbe V."/>
            <person name="Barnay S."/>
            <person name="Blanchin S."/>
            <person name="Beckerich J.-M."/>
            <person name="Beyne E."/>
            <person name="Bleykasten C."/>
            <person name="Boisrame A."/>
            <person name="Boyer J."/>
            <person name="Cattolico L."/>
            <person name="Confanioleri F."/>
            <person name="de Daruvar A."/>
            <person name="Despons L."/>
            <person name="Fabre E."/>
            <person name="Fairhead C."/>
            <person name="Ferry-Dumazet H."/>
            <person name="Groppi A."/>
            <person name="Hantraye F."/>
            <person name="Hennequin C."/>
            <person name="Jauniaux N."/>
            <person name="Joyet P."/>
            <person name="Kachouri R."/>
            <person name="Kerrest A."/>
            <person name="Koszul R."/>
            <person name="Lemaire M."/>
            <person name="Lesur I."/>
            <person name="Ma L."/>
            <person name="Muller H."/>
            <person name="Nicaud J.-M."/>
            <person name="Nikolski M."/>
            <person name="Oztas S."/>
            <person name="Ozier-Kalogeropoulos O."/>
            <person name="Pellenz S."/>
            <person name="Potier S."/>
            <person name="Richard G.-F."/>
            <person name="Straub M.-L."/>
            <person name="Suleau A."/>
            <person name="Swennen D."/>
            <person name="Tekaia F."/>
            <person name="Wesolowski-Louvel M."/>
            <person name="Westhof E."/>
            <person name="Wirth B."/>
            <person name="Zeniou-Meyer M."/>
            <person name="Zivanovic Y."/>
            <person name="Bolotin-Fukuhara M."/>
            <person name="Thierry A."/>
            <person name="Bouchier C."/>
            <person name="Caudron B."/>
            <person name="Scarpelli C."/>
            <person name="Gaillardin C."/>
            <person name="Weissenbach J."/>
            <person name="Wincker P."/>
            <person name="Souciet J.-L."/>
        </authorList>
    </citation>
    <scope>NUCLEOTIDE SEQUENCE [LARGE SCALE GENOMIC DNA]</scope>
    <source>
        <strain>ATCC 2001 / BCRC 20586 / JCM 3761 / NBRC 0622 / NRRL Y-65 / CBS 138</strain>
    </source>
</reference>
<protein>
    <recommendedName>
        <fullName>U2 small nuclear ribonucleoprotein A'</fullName>
        <shortName>U2 snRNP A'</shortName>
    </recommendedName>
</protein>
<dbReference type="EMBL" id="CR380951">
    <property type="protein sequence ID" value="CAG58859.1"/>
    <property type="molecule type" value="Genomic_DNA"/>
</dbReference>
<dbReference type="RefSeq" id="XP_445940.1">
    <property type="nucleotide sequence ID" value="XM_445940.1"/>
</dbReference>
<dbReference type="SMR" id="Q6FV04"/>
<dbReference type="FunCoup" id="Q6FV04">
    <property type="interactions" value="1374"/>
</dbReference>
<dbReference type="STRING" id="284593.Q6FV04"/>
<dbReference type="EnsemblFungi" id="CAGL0E05786g-T">
    <property type="protein sequence ID" value="CAGL0E05786g-T-p1"/>
    <property type="gene ID" value="CAGL0E05786g"/>
</dbReference>
<dbReference type="KEGG" id="cgr:2887467"/>
<dbReference type="CGD" id="CAL0128902">
    <property type="gene designation" value="CAGL0E05786g"/>
</dbReference>
<dbReference type="VEuPathDB" id="FungiDB:CAGL0E05786g"/>
<dbReference type="eggNOG" id="KOG1644">
    <property type="taxonomic scope" value="Eukaryota"/>
</dbReference>
<dbReference type="HOGENOM" id="CLU_061027_3_0_1"/>
<dbReference type="InParanoid" id="Q6FV04"/>
<dbReference type="OMA" id="CHLEDYR"/>
<dbReference type="Proteomes" id="UP000002428">
    <property type="component" value="Chromosome E"/>
</dbReference>
<dbReference type="GO" id="GO:0000974">
    <property type="term" value="C:Prp19 complex"/>
    <property type="evidence" value="ECO:0007669"/>
    <property type="project" value="EnsemblFungi"/>
</dbReference>
<dbReference type="GO" id="GO:0005686">
    <property type="term" value="C:U2 snRNP"/>
    <property type="evidence" value="ECO:0007669"/>
    <property type="project" value="EnsemblFungi"/>
</dbReference>
<dbReference type="GO" id="GO:0071004">
    <property type="term" value="C:U2-type prespliceosome"/>
    <property type="evidence" value="ECO:0007669"/>
    <property type="project" value="EnsemblFungi"/>
</dbReference>
<dbReference type="GO" id="GO:0030620">
    <property type="term" value="F:U2 snRNA binding"/>
    <property type="evidence" value="ECO:0007669"/>
    <property type="project" value="InterPro"/>
</dbReference>
<dbReference type="GO" id="GO:0000398">
    <property type="term" value="P:mRNA splicing, via spliceosome"/>
    <property type="evidence" value="ECO:0007669"/>
    <property type="project" value="EnsemblFungi"/>
</dbReference>
<dbReference type="Gene3D" id="3.80.10.10">
    <property type="entry name" value="Ribonuclease Inhibitor"/>
    <property type="match status" value="1"/>
</dbReference>
<dbReference type="InterPro" id="IPR001611">
    <property type="entry name" value="Leu-rich_rpt"/>
</dbReference>
<dbReference type="InterPro" id="IPR032675">
    <property type="entry name" value="LRR_dom_sf"/>
</dbReference>
<dbReference type="InterPro" id="IPR044640">
    <property type="entry name" value="RU2A"/>
</dbReference>
<dbReference type="PANTHER" id="PTHR10552">
    <property type="entry name" value="U2 SMALL NUCLEAR RIBONUCLEOPROTEIN A"/>
    <property type="match status" value="1"/>
</dbReference>
<dbReference type="PANTHER" id="PTHR10552:SF6">
    <property type="entry name" value="U2 SMALL NUCLEAR RIBONUCLEOPROTEIN A"/>
    <property type="match status" value="1"/>
</dbReference>
<dbReference type="Pfam" id="PF14580">
    <property type="entry name" value="LRR_9"/>
    <property type="match status" value="1"/>
</dbReference>
<dbReference type="SUPFAM" id="SSF52058">
    <property type="entry name" value="L domain-like"/>
    <property type="match status" value="1"/>
</dbReference>
<dbReference type="PROSITE" id="PS51450">
    <property type="entry name" value="LRR"/>
    <property type="match status" value="2"/>
</dbReference>
<proteinExistence type="inferred from homology"/>
<accession>Q6FV04</accession>